<organismHost>
    <name type="scientific">Acanthamoeba polyphaga</name>
    <name type="common">Amoeba</name>
    <dbReference type="NCBI Taxonomy" id="5757"/>
</organismHost>
<protein>
    <recommendedName>
        <fullName>Uncharacterized protein L754</fullName>
    </recommendedName>
</protein>
<dbReference type="EMBL" id="AY653733">
    <property type="protein sequence ID" value="AAV51014.1"/>
    <property type="molecule type" value="Genomic_DNA"/>
</dbReference>
<dbReference type="SMR" id="Q5UP08"/>
<dbReference type="Proteomes" id="UP000001134">
    <property type="component" value="Genome"/>
</dbReference>
<sequence>MIPMTIVQKMILMEIVQKMILITIIQKMNQIANYTMKKIINAPGIIKLTKKEKIKDNDGNIIEIEVRGTRDPENIFFRVSDVINGFDMPKLYDTITRNNSGYRQNIHYRYFNFKKTTKKGYCMKLFLTFIGMEKVINCSRSIHIQNAMIARKWLSQFSASIKFNSLVLDSSKSSTSNIGYVYCITSEKIDANKIGYWKGTRKDLICRYKTYYGDYVELFCVKTMYPELLEKKCHQHFINYKLSHELYDKSNTDKYKLYLKENKITPTEQDIYEDQQITKTDVKTLFTTHLTTQDQKNKLSSKLMGIPTNIISVDKIKELENEIKELKYQNEIKELKYQNEIKELKYQNEINELKYKNIILEKDLEISNLNKKLKKKN</sequence>
<keyword id="KW-0175">Coiled coil</keyword>
<keyword id="KW-1185">Reference proteome</keyword>
<reference key="1">
    <citation type="journal article" date="2004" name="Science">
        <title>The 1.2-megabase genome sequence of Mimivirus.</title>
        <authorList>
            <person name="Raoult D."/>
            <person name="Audic S."/>
            <person name="Robert C."/>
            <person name="Abergel C."/>
            <person name="Renesto P."/>
            <person name="Ogata H."/>
            <person name="La Scola B."/>
            <person name="Susan M."/>
            <person name="Claverie J.-M."/>
        </authorList>
    </citation>
    <scope>NUCLEOTIDE SEQUENCE [LARGE SCALE GENOMIC DNA]</scope>
    <source>
        <strain>Rowbotham-Bradford</strain>
    </source>
</reference>
<name>YL754_MIMIV</name>
<evidence type="ECO:0000255" key="1"/>
<evidence type="ECO:0000305" key="2"/>
<feature type="chain" id="PRO_0000071347" description="Uncharacterized protein L754">
    <location>
        <begin position="1"/>
        <end position="377"/>
    </location>
</feature>
<feature type="coiled-coil region" evidence="1">
    <location>
        <begin position="309"/>
        <end position="375"/>
    </location>
</feature>
<proteinExistence type="inferred from homology"/>
<comment type="similarity">
    <text evidence="2">Belongs to the mimivirus L5 family.</text>
</comment>
<gene>
    <name type="ordered locus">MIMI_L754</name>
</gene>
<organism>
    <name type="scientific">Acanthamoeba polyphaga mimivirus</name>
    <name type="common">APMV</name>
    <dbReference type="NCBI Taxonomy" id="212035"/>
    <lineage>
        <taxon>Viruses</taxon>
        <taxon>Varidnaviria</taxon>
        <taxon>Bamfordvirae</taxon>
        <taxon>Nucleocytoviricota</taxon>
        <taxon>Megaviricetes</taxon>
        <taxon>Imitervirales</taxon>
        <taxon>Mimiviridae</taxon>
        <taxon>Megamimivirinae</taxon>
        <taxon>Mimivirus</taxon>
        <taxon>Mimivirus bradfordmassiliense</taxon>
    </lineage>
</organism>
<accession>Q5UP08</accession>